<organism>
    <name type="scientific">Sinorhizobium medicae (strain WSM419)</name>
    <name type="common">Ensifer medicae</name>
    <dbReference type="NCBI Taxonomy" id="366394"/>
    <lineage>
        <taxon>Bacteria</taxon>
        <taxon>Pseudomonadati</taxon>
        <taxon>Pseudomonadota</taxon>
        <taxon>Alphaproteobacteria</taxon>
        <taxon>Hyphomicrobiales</taxon>
        <taxon>Rhizobiaceae</taxon>
        <taxon>Sinorhizobium/Ensifer group</taxon>
        <taxon>Sinorhizobium</taxon>
    </lineage>
</organism>
<name>PYRD_SINMW</name>
<comment type="function">
    <text evidence="1">Catalyzes the conversion of dihydroorotate to orotate with quinone as electron acceptor.</text>
</comment>
<comment type="catalytic activity">
    <reaction evidence="1">
        <text>(S)-dihydroorotate + a quinone = orotate + a quinol</text>
        <dbReference type="Rhea" id="RHEA:30187"/>
        <dbReference type="ChEBI" id="CHEBI:24646"/>
        <dbReference type="ChEBI" id="CHEBI:30839"/>
        <dbReference type="ChEBI" id="CHEBI:30864"/>
        <dbReference type="ChEBI" id="CHEBI:132124"/>
        <dbReference type="EC" id="1.3.5.2"/>
    </reaction>
</comment>
<comment type="cofactor">
    <cofactor evidence="1">
        <name>FMN</name>
        <dbReference type="ChEBI" id="CHEBI:58210"/>
    </cofactor>
    <text evidence="1">Binds 1 FMN per subunit.</text>
</comment>
<comment type="pathway">
    <text evidence="1">Pyrimidine metabolism; UMP biosynthesis via de novo pathway; orotate from (S)-dihydroorotate (quinone route): step 1/1.</text>
</comment>
<comment type="subunit">
    <text evidence="1">Monomer.</text>
</comment>
<comment type="subcellular location">
    <subcellularLocation>
        <location evidence="1">Cell membrane</location>
        <topology evidence="1">Peripheral membrane protein</topology>
    </subcellularLocation>
</comment>
<comment type="similarity">
    <text evidence="1">Belongs to the dihydroorotate dehydrogenase family. Type 2 subfamily.</text>
</comment>
<proteinExistence type="inferred from homology"/>
<reference key="1">
    <citation type="submission" date="2007-06" db="EMBL/GenBank/DDBJ databases">
        <title>Complete sequence of Sinorhizobium medicae WSM419 chromosome.</title>
        <authorList>
            <consortium name="US DOE Joint Genome Institute"/>
            <person name="Copeland A."/>
            <person name="Lucas S."/>
            <person name="Lapidus A."/>
            <person name="Barry K."/>
            <person name="Glavina del Rio T."/>
            <person name="Dalin E."/>
            <person name="Tice H."/>
            <person name="Pitluck S."/>
            <person name="Chain P."/>
            <person name="Malfatti S."/>
            <person name="Shin M."/>
            <person name="Vergez L."/>
            <person name="Schmutz J."/>
            <person name="Larimer F."/>
            <person name="Land M."/>
            <person name="Hauser L."/>
            <person name="Kyrpides N."/>
            <person name="Mikhailova N."/>
            <person name="Reeve W.G."/>
            <person name="Richardson P."/>
        </authorList>
    </citation>
    <scope>NUCLEOTIDE SEQUENCE [LARGE SCALE GENOMIC DNA]</scope>
    <source>
        <strain>WSM419</strain>
    </source>
</reference>
<accession>A6U5U0</accession>
<protein>
    <recommendedName>
        <fullName evidence="1">Dihydroorotate dehydrogenase (quinone)</fullName>
        <ecNumber evidence="1">1.3.5.2</ecNumber>
    </recommendedName>
    <alternativeName>
        <fullName evidence="1">DHOdehase</fullName>
        <shortName evidence="1">DHOD</shortName>
        <shortName evidence="1">DHODase</shortName>
    </alternativeName>
    <alternativeName>
        <fullName evidence="1">Dihydroorotate oxidase</fullName>
    </alternativeName>
</protein>
<dbReference type="EC" id="1.3.5.2" evidence="1"/>
<dbReference type="EMBL" id="CP000738">
    <property type="protein sequence ID" value="ABR59020.1"/>
    <property type="molecule type" value="Genomic_DNA"/>
</dbReference>
<dbReference type="RefSeq" id="WP_011974372.1">
    <property type="nucleotide sequence ID" value="NC_009636.1"/>
</dbReference>
<dbReference type="RefSeq" id="YP_001325855.1">
    <property type="nucleotide sequence ID" value="NC_009636.1"/>
</dbReference>
<dbReference type="SMR" id="A6U5U0"/>
<dbReference type="STRING" id="366394.Smed_0161"/>
<dbReference type="GeneID" id="61614474"/>
<dbReference type="KEGG" id="smd:Smed_0161"/>
<dbReference type="PATRIC" id="fig|366394.8.peg.3219"/>
<dbReference type="eggNOG" id="COG0167">
    <property type="taxonomic scope" value="Bacteria"/>
</dbReference>
<dbReference type="HOGENOM" id="CLU_013640_2_1_5"/>
<dbReference type="OrthoDB" id="9802377at2"/>
<dbReference type="UniPathway" id="UPA00070">
    <property type="reaction ID" value="UER00946"/>
</dbReference>
<dbReference type="Proteomes" id="UP000001108">
    <property type="component" value="Chromosome"/>
</dbReference>
<dbReference type="GO" id="GO:0005737">
    <property type="term" value="C:cytoplasm"/>
    <property type="evidence" value="ECO:0007669"/>
    <property type="project" value="InterPro"/>
</dbReference>
<dbReference type="GO" id="GO:0005886">
    <property type="term" value="C:plasma membrane"/>
    <property type="evidence" value="ECO:0007669"/>
    <property type="project" value="UniProtKB-SubCell"/>
</dbReference>
<dbReference type="GO" id="GO:0106430">
    <property type="term" value="F:dihydroorotate dehydrogenase (quinone) activity"/>
    <property type="evidence" value="ECO:0007669"/>
    <property type="project" value="UniProtKB-EC"/>
</dbReference>
<dbReference type="GO" id="GO:0006207">
    <property type="term" value="P:'de novo' pyrimidine nucleobase biosynthetic process"/>
    <property type="evidence" value="ECO:0007669"/>
    <property type="project" value="InterPro"/>
</dbReference>
<dbReference type="GO" id="GO:0044205">
    <property type="term" value="P:'de novo' UMP biosynthetic process"/>
    <property type="evidence" value="ECO:0007669"/>
    <property type="project" value="UniProtKB-UniRule"/>
</dbReference>
<dbReference type="CDD" id="cd04738">
    <property type="entry name" value="DHOD_2_like"/>
    <property type="match status" value="1"/>
</dbReference>
<dbReference type="Gene3D" id="3.20.20.70">
    <property type="entry name" value="Aldolase class I"/>
    <property type="match status" value="1"/>
</dbReference>
<dbReference type="HAMAP" id="MF_00225">
    <property type="entry name" value="DHO_dh_type2"/>
    <property type="match status" value="1"/>
</dbReference>
<dbReference type="InterPro" id="IPR013785">
    <property type="entry name" value="Aldolase_TIM"/>
</dbReference>
<dbReference type="InterPro" id="IPR050074">
    <property type="entry name" value="DHO_dehydrogenase"/>
</dbReference>
<dbReference type="InterPro" id="IPR005719">
    <property type="entry name" value="Dihydroorotate_DH_2"/>
</dbReference>
<dbReference type="InterPro" id="IPR005720">
    <property type="entry name" value="Dihydroorotate_DH_cat"/>
</dbReference>
<dbReference type="InterPro" id="IPR001295">
    <property type="entry name" value="Dihydroorotate_DH_CS"/>
</dbReference>
<dbReference type="NCBIfam" id="NF003645">
    <property type="entry name" value="PRK05286.1-2"/>
    <property type="match status" value="1"/>
</dbReference>
<dbReference type="NCBIfam" id="NF003652">
    <property type="entry name" value="PRK05286.2-5"/>
    <property type="match status" value="1"/>
</dbReference>
<dbReference type="NCBIfam" id="TIGR01036">
    <property type="entry name" value="pyrD_sub2"/>
    <property type="match status" value="1"/>
</dbReference>
<dbReference type="PANTHER" id="PTHR48109:SF4">
    <property type="entry name" value="DIHYDROOROTATE DEHYDROGENASE (QUINONE), MITOCHONDRIAL"/>
    <property type="match status" value="1"/>
</dbReference>
<dbReference type="PANTHER" id="PTHR48109">
    <property type="entry name" value="DIHYDROOROTATE DEHYDROGENASE (QUINONE), MITOCHONDRIAL-RELATED"/>
    <property type="match status" value="1"/>
</dbReference>
<dbReference type="Pfam" id="PF01180">
    <property type="entry name" value="DHO_dh"/>
    <property type="match status" value="1"/>
</dbReference>
<dbReference type="SUPFAM" id="SSF51395">
    <property type="entry name" value="FMN-linked oxidoreductases"/>
    <property type="match status" value="1"/>
</dbReference>
<dbReference type="PROSITE" id="PS00911">
    <property type="entry name" value="DHODEHASE_1"/>
    <property type="match status" value="1"/>
</dbReference>
<dbReference type="PROSITE" id="PS00912">
    <property type="entry name" value="DHODEHASE_2"/>
    <property type="match status" value="1"/>
</dbReference>
<keyword id="KW-1003">Cell membrane</keyword>
<keyword id="KW-0285">Flavoprotein</keyword>
<keyword id="KW-0288">FMN</keyword>
<keyword id="KW-0472">Membrane</keyword>
<keyword id="KW-0560">Oxidoreductase</keyword>
<keyword id="KW-0665">Pyrimidine biosynthesis</keyword>
<evidence type="ECO:0000255" key="1">
    <source>
        <dbReference type="HAMAP-Rule" id="MF_00225"/>
    </source>
</evidence>
<gene>
    <name evidence="1" type="primary">pyrD</name>
    <name type="ordered locus">Smed_0161</name>
</gene>
<sequence>MIGGLEHLARRGLFLFDPEAAHGLSITALKTGLVPSCAAPADPRLQQSVAGLAFPNPVGMAAGYDKNAEVPEALLKIGFGFTEIGTVTPRPQPGNDKPRLFRLIEDEAVINRLGFNNEGHGAALARLKACSREALIGVNIGANKDSADRIADYVTGIRTFYAVARYFTANISSPNTPGLRDLQARESLATLLSAVLAAREDEAGKCGRRVPVFLKIAPDLTEEGMDDIAAEVLAQGLDGLIVSNTTLARARLRDRKQASEVGGLSGKPLFEKSTAVLARMRRRVGPDLPIIGVGGVSSAETAAEKIRAGADLVQLYSCMVYEGPSLPGRIVRGLSALCDREKLASIREIRDSRVDYWTGMNV</sequence>
<feature type="chain" id="PRO_1000024235" description="Dihydroorotate dehydrogenase (quinone)">
    <location>
        <begin position="1"/>
        <end position="362"/>
    </location>
</feature>
<feature type="active site" description="Nucleophile" evidence="1">
    <location>
        <position position="173"/>
    </location>
</feature>
<feature type="binding site" evidence="1">
    <location>
        <begin position="62"/>
        <end position="66"/>
    </location>
    <ligand>
        <name>FMN</name>
        <dbReference type="ChEBI" id="CHEBI:58210"/>
    </ligand>
</feature>
<feature type="binding site" evidence="1">
    <location>
        <position position="66"/>
    </location>
    <ligand>
        <name>substrate</name>
    </ligand>
</feature>
<feature type="binding site" evidence="1">
    <location>
        <position position="86"/>
    </location>
    <ligand>
        <name>FMN</name>
        <dbReference type="ChEBI" id="CHEBI:58210"/>
    </ligand>
</feature>
<feature type="binding site" evidence="1">
    <location>
        <begin position="111"/>
        <end position="115"/>
    </location>
    <ligand>
        <name>substrate</name>
    </ligand>
</feature>
<feature type="binding site" evidence="1">
    <location>
        <position position="139"/>
    </location>
    <ligand>
        <name>FMN</name>
        <dbReference type="ChEBI" id="CHEBI:58210"/>
    </ligand>
</feature>
<feature type="binding site" evidence="1">
    <location>
        <position position="170"/>
    </location>
    <ligand>
        <name>FMN</name>
        <dbReference type="ChEBI" id="CHEBI:58210"/>
    </ligand>
</feature>
<feature type="binding site" evidence="1">
    <location>
        <position position="170"/>
    </location>
    <ligand>
        <name>substrate</name>
    </ligand>
</feature>
<feature type="binding site" evidence="1">
    <location>
        <position position="175"/>
    </location>
    <ligand>
        <name>substrate</name>
    </ligand>
</feature>
<feature type="binding site" evidence="1">
    <location>
        <position position="215"/>
    </location>
    <ligand>
        <name>FMN</name>
        <dbReference type="ChEBI" id="CHEBI:58210"/>
    </ligand>
</feature>
<feature type="binding site" evidence="1">
    <location>
        <position position="243"/>
    </location>
    <ligand>
        <name>FMN</name>
        <dbReference type="ChEBI" id="CHEBI:58210"/>
    </ligand>
</feature>
<feature type="binding site" evidence="1">
    <location>
        <begin position="244"/>
        <end position="245"/>
    </location>
    <ligand>
        <name>substrate</name>
    </ligand>
</feature>
<feature type="binding site" evidence="1">
    <location>
        <position position="266"/>
    </location>
    <ligand>
        <name>FMN</name>
        <dbReference type="ChEBI" id="CHEBI:58210"/>
    </ligand>
</feature>
<feature type="binding site" evidence="1">
    <location>
        <position position="295"/>
    </location>
    <ligand>
        <name>FMN</name>
        <dbReference type="ChEBI" id="CHEBI:58210"/>
    </ligand>
</feature>
<feature type="binding site" evidence="1">
    <location>
        <begin position="316"/>
        <end position="317"/>
    </location>
    <ligand>
        <name>FMN</name>
        <dbReference type="ChEBI" id="CHEBI:58210"/>
    </ligand>
</feature>